<protein>
    <recommendedName>
        <fullName>Calcineurin subunit B</fullName>
    </recommendedName>
    <alternativeName>
        <fullName>Calcineurin regulatory subunit</fullName>
    </alternativeName>
    <alternativeName>
        <fullName>Protein phosphatase 2B regulatory subunit</fullName>
    </alternativeName>
</protein>
<name>CANB_KLULA</name>
<comment type="function">
    <text evidence="1">Regulatory subunit of calcineurin, a calcium-dependent, calmodulin stimulated protein phosphatase. Confers calcium sensitivity (By similarity).</text>
</comment>
<comment type="subunit">
    <text evidence="1">Composed of a catalytic subunit (A) and a regulatory subunit (B).</text>
</comment>
<comment type="miscellaneous">
    <text evidence="1">This protein has four functional calcium-binding sites.</text>
</comment>
<comment type="similarity">
    <text evidence="3">Belongs to the calcineurin regulatory subunit family.</text>
</comment>
<evidence type="ECO:0000250" key="1"/>
<evidence type="ECO:0000255" key="2">
    <source>
        <dbReference type="PROSITE-ProRule" id="PRU00448"/>
    </source>
</evidence>
<evidence type="ECO:0000305" key="3"/>
<dbReference type="EMBL" id="AJ428419">
    <property type="protein sequence ID" value="CAD21467.1"/>
    <property type="molecule type" value="Genomic_DNA"/>
</dbReference>
<dbReference type="EMBL" id="CR382124">
    <property type="protein sequence ID" value="CAH00297.1"/>
    <property type="molecule type" value="Genomic_DNA"/>
</dbReference>
<dbReference type="RefSeq" id="XP_453201.1">
    <property type="nucleotide sequence ID" value="XM_453201.1"/>
</dbReference>
<dbReference type="SMR" id="Q874T7"/>
<dbReference type="FunCoup" id="Q874T7">
    <property type="interactions" value="878"/>
</dbReference>
<dbReference type="STRING" id="284590.Q874T7"/>
<dbReference type="PaxDb" id="284590-Q874T7"/>
<dbReference type="KEGG" id="kla:KLLA0_D02992g"/>
<dbReference type="eggNOG" id="KOG0034">
    <property type="taxonomic scope" value="Eukaryota"/>
</dbReference>
<dbReference type="HOGENOM" id="CLU_061288_10_1_1"/>
<dbReference type="InParanoid" id="Q874T7"/>
<dbReference type="OMA" id="DTNFDRD"/>
<dbReference type="Proteomes" id="UP000000598">
    <property type="component" value="Chromosome D"/>
</dbReference>
<dbReference type="GO" id="GO:0005509">
    <property type="term" value="F:calcium ion binding"/>
    <property type="evidence" value="ECO:0007669"/>
    <property type="project" value="InterPro"/>
</dbReference>
<dbReference type="CDD" id="cd00051">
    <property type="entry name" value="EFh"/>
    <property type="match status" value="1"/>
</dbReference>
<dbReference type="FunFam" id="1.10.238.10:FF:000047">
    <property type="entry name" value="Calcineurin subunit B type 1"/>
    <property type="match status" value="1"/>
</dbReference>
<dbReference type="Gene3D" id="1.10.238.10">
    <property type="entry name" value="EF-hand"/>
    <property type="match status" value="1"/>
</dbReference>
<dbReference type="InterPro" id="IPR011992">
    <property type="entry name" value="EF-hand-dom_pair"/>
</dbReference>
<dbReference type="InterPro" id="IPR018247">
    <property type="entry name" value="EF_Hand_1_Ca_BS"/>
</dbReference>
<dbReference type="InterPro" id="IPR002048">
    <property type="entry name" value="EF_hand_dom"/>
</dbReference>
<dbReference type="PANTHER" id="PTHR45942">
    <property type="entry name" value="PROTEIN PHOSPATASE 3 REGULATORY SUBUNIT B ALPHA ISOFORM TYPE 1"/>
    <property type="match status" value="1"/>
</dbReference>
<dbReference type="Pfam" id="PF13499">
    <property type="entry name" value="EF-hand_7"/>
    <property type="match status" value="2"/>
</dbReference>
<dbReference type="PRINTS" id="PR00450">
    <property type="entry name" value="RECOVERIN"/>
</dbReference>
<dbReference type="SMART" id="SM00054">
    <property type="entry name" value="EFh"/>
    <property type="match status" value="4"/>
</dbReference>
<dbReference type="SUPFAM" id="SSF47473">
    <property type="entry name" value="EF-hand"/>
    <property type="match status" value="1"/>
</dbReference>
<dbReference type="PROSITE" id="PS00018">
    <property type="entry name" value="EF_HAND_1"/>
    <property type="match status" value="4"/>
</dbReference>
<dbReference type="PROSITE" id="PS50222">
    <property type="entry name" value="EF_HAND_2"/>
    <property type="match status" value="4"/>
</dbReference>
<accession>Q874T7</accession>
<proteinExistence type="inferred from homology"/>
<organism>
    <name type="scientific">Kluyveromyces lactis (strain ATCC 8585 / CBS 2359 / DSM 70799 / NBRC 1267 / NRRL Y-1140 / WM37)</name>
    <name type="common">Yeast</name>
    <name type="synonym">Candida sphaerica</name>
    <dbReference type="NCBI Taxonomy" id="284590"/>
    <lineage>
        <taxon>Eukaryota</taxon>
        <taxon>Fungi</taxon>
        <taxon>Dikarya</taxon>
        <taxon>Ascomycota</taxon>
        <taxon>Saccharomycotina</taxon>
        <taxon>Saccharomycetes</taxon>
        <taxon>Saccharomycetales</taxon>
        <taxon>Saccharomycetaceae</taxon>
        <taxon>Kluyveromyces</taxon>
    </lineage>
</organism>
<keyword id="KW-0106">Calcium</keyword>
<keyword id="KW-0479">Metal-binding</keyword>
<keyword id="KW-1185">Reference proteome</keyword>
<keyword id="KW-0677">Repeat</keyword>
<sequence length="175" mass="19768">MGAAPSRIVDNLLDDTNFDRAEIERLKKRFMKLDKDSSGSIDKTEFMSIPGVSANPLAKRIIEVFDEDNSGDVDFQEFITSLSIFSGRGETDAKLRFAFRIYDIDKDGYISNGELFIVLKIMVGTNLEDEQLQQIVDRTIMENDVDGDGKLSFEEFKKAAETTEVIQSLTLQHNI</sequence>
<feature type="chain" id="PRO_0000073494" description="Calcineurin subunit B">
    <location>
        <begin position="1"/>
        <end position="175"/>
    </location>
</feature>
<feature type="domain" description="EF-hand 1" evidence="2">
    <location>
        <begin position="21"/>
        <end position="56"/>
    </location>
</feature>
<feature type="domain" description="EF-hand 2" evidence="2">
    <location>
        <begin position="58"/>
        <end position="88"/>
    </location>
</feature>
<feature type="domain" description="EF-hand 3" evidence="2">
    <location>
        <begin position="90"/>
        <end position="125"/>
    </location>
</feature>
<feature type="domain" description="EF-hand 4" evidence="2">
    <location>
        <begin position="131"/>
        <end position="166"/>
    </location>
</feature>
<feature type="binding site" evidence="2">
    <location>
        <position position="34"/>
    </location>
    <ligand>
        <name>Ca(2+)</name>
        <dbReference type="ChEBI" id="CHEBI:29108"/>
        <label>1</label>
    </ligand>
</feature>
<feature type="binding site" evidence="2">
    <location>
        <position position="36"/>
    </location>
    <ligand>
        <name>Ca(2+)</name>
        <dbReference type="ChEBI" id="CHEBI:29108"/>
        <label>1</label>
    </ligand>
</feature>
<feature type="binding site" evidence="2">
    <location>
        <position position="38"/>
    </location>
    <ligand>
        <name>Ca(2+)</name>
        <dbReference type="ChEBI" id="CHEBI:29108"/>
        <label>1</label>
    </ligand>
</feature>
<feature type="binding site" evidence="2">
    <location>
        <position position="40"/>
    </location>
    <ligand>
        <name>Ca(2+)</name>
        <dbReference type="ChEBI" id="CHEBI:29108"/>
        <label>1</label>
    </ligand>
</feature>
<feature type="binding site" evidence="2">
    <location>
        <position position="45"/>
    </location>
    <ligand>
        <name>Ca(2+)</name>
        <dbReference type="ChEBI" id="CHEBI:29108"/>
        <label>1</label>
    </ligand>
</feature>
<feature type="binding site" evidence="2">
    <location>
        <position position="66"/>
    </location>
    <ligand>
        <name>Ca(2+)</name>
        <dbReference type="ChEBI" id="CHEBI:29108"/>
        <label>2</label>
    </ligand>
</feature>
<feature type="binding site" evidence="2">
    <location>
        <position position="68"/>
    </location>
    <ligand>
        <name>Ca(2+)</name>
        <dbReference type="ChEBI" id="CHEBI:29108"/>
        <label>2</label>
    </ligand>
</feature>
<feature type="binding site" evidence="2">
    <location>
        <position position="70"/>
    </location>
    <ligand>
        <name>Ca(2+)</name>
        <dbReference type="ChEBI" id="CHEBI:29108"/>
        <label>2</label>
    </ligand>
</feature>
<feature type="binding site" evidence="2">
    <location>
        <position position="72"/>
    </location>
    <ligand>
        <name>Ca(2+)</name>
        <dbReference type="ChEBI" id="CHEBI:29108"/>
        <label>2</label>
    </ligand>
</feature>
<feature type="binding site" evidence="2">
    <location>
        <position position="77"/>
    </location>
    <ligand>
        <name>Ca(2+)</name>
        <dbReference type="ChEBI" id="CHEBI:29108"/>
        <label>2</label>
    </ligand>
</feature>
<feature type="binding site" evidence="2">
    <location>
        <position position="103"/>
    </location>
    <ligand>
        <name>Ca(2+)</name>
        <dbReference type="ChEBI" id="CHEBI:29108"/>
        <label>3</label>
    </ligand>
</feature>
<feature type="binding site" evidence="2">
    <location>
        <position position="105"/>
    </location>
    <ligand>
        <name>Ca(2+)</name>
        <dbReference type="ChEBI" id="CHEBI:29108"/>
        <label>3</label>
    </ligand>
</feature>
<feature type="binding site" evidence="2">
    <location>
        <position position="107"/>
    </location>
    <ligand>
        <name>Ca(2+)</name>
        <dbReference type="ChEBI" id="CHEBI:29108"/>
        <label>3</label>
    </ligand>
</feature>
<feature type="binding site" evidence="2">
    <location>
        <position position="109"/>
    </location>
    <ligand>
        <name>Ca(2+)</name>
        <dbReference type="ChEBI" id="CHEBI:29108"/>
        <label>3</label>
    </ligand>
</feature>
<feature type="binding site" evidence="2">
    <location>
        <position position="114"/>
    </location>
    <ligand>
        <name>Ca(2+)</name>
        <dbReference type="ChEBI" id="CHEBI:29108"/>
        <label>3</label>
    </ligand>
</feature>
<feature type="binding site" evidence="2">
    <location>
        <position position="144"/>
    </location>
    <ligand>
        <name>Ca(2+)</name>
        <dbReference type="ChEBI" id="CHEBI:29108"/>
        <label>4</label>
    </ligand>
</feature>
<feature type="binding site" evidence="2">
    <location>
        <position position="146"/>
    </location>
    <ligand>
        <name>Ca(2+)</name>
        <dbReference type="ChEBI" id="CHEBI:29108"/>
        <label>4</label>
    </ligand>
</feature>
<feature type="binding site" evidence="2">
    <location>
        <position position="148"/>
    </location>
    <ligand>
        <name>Ca(2+)</name>
        <dbReference type="ChEBI" id="CHEBI:29108"/>
        <label>4</label>
    </ligand>
</feature>
<feature type="binding site" evidence="2">
    <location>
        <position position="150"/>
    </location>
    <ligand>
        <name>Ca(2+)</name>
        <dbReference type="ChEBI" id="CHEBI:29108"/>
        <label>4</label>
    </ligand>
</feature>
<feature type="binding site" evidence="2">
    <location>
        <position position="155"/>
    </location>
    <ligand>
        <name>Ca(2+)</name>
        <dbReference type="ChEBI" id="CHEBI:29108"/>
        <label>4</label>
    </ligand>
</feature>
<reference key="1">
    <citation type="submission" date="2002-01" db="EMBL/GenBank/DDBJ databases">
        <title>The KlCNB1 gene of Kluyveromyces lactis encodes for calcineurin.</title>
        <authorList>
            <person name="Palleschi C."/>
            <person name="Farina F."/>
            <person name="Uccelletti D."/>
        </authorList>
    </citation>
    <scope>NUCLEOTIDE SEQUENCE [GENOMIC DNA]</scope>
    <source>
        <strain>ATCC 76492 / CBS 2359/152 / CLIB 210</strain>
    </source>
</reference>
<reference key="2">
    <citation type="journal article" date="2004" name="Nature">
        <title>Genome evolution in yeasts.</title>
        <authorList>
            <person name="Dujon B."/>
            <person name="Sherman D."/>
            <person name="Fischer G."/>
            <person name="Durrens P."/>
            <person name="Casaregola S."/>
            <person name="Lafontaine I."/>
            <person name="de Montigny J."/>
            <person name="Marck C."/>
            <person name="Neuveglise C."/>
            <person name="Talla E."/>
            <person name="Goffard N."/>
            <person name="Frangeul L."/>
            <person name="Aigle M."/>
            <person name="Anthouard V."/>
            <person name="Babour A."/>
            <person name="Barbe V."/>
            <person name="Barnay S."/>
            <person name="Blanchin S."/>
            <person name="Beckerich J.-M."/>
            <person name="Beyne E."/>
            <person name="Bleykasten C."/>
            <person name="Boisrame A."/>
            <person name="Boyer J."/>
            <person name="Cattolico L."/>
            <person name="Confanioleri F."/>
            <person name="de Daruvar A."/>
            <person name="Despons L."/>
            <person name="Fabre E."/>
            <person name="Fairhead C."/>
            <person name="Ferry-Dumazet H."/>
            <person name="Groppi A."/>
            <person name="Hantraye F."/>
            <person name="Hennequin C."/>
            <person name="Jauniaux N."/>
            <person name="Joyet P."/>
            <person name="Kachouri R."/>
            <person name="Kerrest A."/>
            <person name="Koszul R."/>
            <person name="Lemaire M."/>
            <person name="Lesur I."/>
            <person name="Ma L."/>
            <person name="Muller H."/>
            <person name="Nicaud J.-M."/>
            <person name="Nikolski M."/>
            <person name="Oztas S."/>
            <person name="Ozier-Kalogeropoulos O."/>
            <person name="Pellenz S."/>
            <person name="Potier S."/>
            <person name="Richard G.-F."/>
            <person name="Straub M.-L."/>
            <person name="Suleau A."/>
            <person name="Swennen D."/>
            <person name="Tekaia F."/>
            <person name="Wesolowski-Louvel M."/>
            <person name="Westhof E."/>
            <person name="Wirth B."/>
            <person name="Zeniou-Meyer M."/>
            <person name="Zivanovic Y."/>
            <person name="Bolotin-Fukuhara M."/>
            <person name="Thierry A."/>
            <person name="Bouchier C."/>
            <person name="Caudron B."/>
            <person name="Scarpelli C."/>
            <person name="Gaillardin C."/>
            <person name="Weissenbach J."/>
            <person name="Wincker P."/>
            <person name="Souciet J.-L."/>
        </authorList>
    </citation>
    <scope>NUCLEOTIDE SEQUENCE [LARGE SCALE GENOMIC DNA]</scope>
    <source>
        <strain>ATCC 8585 / CBS 2359 / DSM 70799 / NBRC 1267 / NRRL Y-1140 / WM37</strain>
    </source>
</reference>
<gene>
    <name type="primary">CNB1</name>
    <name type="ordered locus">KLLA0D02992g</name>
</gene>